<evidence type="ECO:0000255" key="1"/>
<evidence type="ECO:0000305" key="2"/>
<evidence type="ECO:0000305" key="3">
    <source>
    </source>
</evidence>
<dbReference type="EMBL" id="U22382">
    <property type="protein sequence ID" value="AAB67536.1"/>
    <property type="molecule type" value="Genomic_DNA"/>
</dbReference>
<dbReference type="EMBL" id="AY693269">
    <property type="protein sequence ID" value="AAT93288.1"/>
    <property type="molecule type" value="Genomic_DNA"/>
</dbReference>
<dbReference type="PIR" id="S69323">
    <property type="entry name" value="S69323"/>
</dbReference>
<dbReference type="SMR" id="O13560"/>
<dbReference type="STRING" id="4932.YLR444C"/>
<dbReference type="PaxDb" id="4932-YLR444C"/>
<dbReference type="EnsemblFungi" id="YLR444C_mRNA">
    <property type="protein sequence ID" value="YLR444C"/>
    <property type="gene ID" value="YLR444C"/>
</dbReference>
<dbReference type="AGR" id="SGD:S000004436"/>
<dbReference type="SGD" id="S000004436">
    <property type="gene designation" value="YLR444C"/>
</dbReference>
<dbReference type="HOGENOM" id="CLU_2308278_0_0_1"/>
<dbReference type="GO" id="GO:0016020">
    <property type="term" value="C:membrane"/>
    <property type="evidence" value="ECO:0007669"/>
    <property type="project" value="UniProtKB-SubCell"/>
</dbReference>
<protein>
    <recommendedName>
        <fullName>Putative uncharacterized protein YLR444C</fullName>
    </recommendedName>
</protein>
<gene>
    <name type="ordered locus">YLR444C</name>
</gene>
<name>YL444_YEAST</name>
<proteinExistence type="uncertain"/>
<sequence>MMGERIQNCNADEGLITLCILSSLSLLDRNLMSCNSNSSLVANGSCLPPLLIFAVGFPWSKLVLASFSLFKSTSDVFLIVAIVSLFLISSASPEVDCRCG</sequence>
<comment type="subcellular location">
    <subcellularLocation>
        <location evidence="2">Membrane</location>
        <topology evidence="2">Multi-pass membrane protein</topology>
    </subcellularLocation>
</comment>
<comment type="miscellaneous">
    <text evidence="2">Almost completely overlaps ECM7.</text>
</comment>
<comment type="caution">
    <text evidence="3">Product of a dubious gene prediction unlikely to encode a functional protein. Because of that it is not part of the S.cerevisiae S288c complete/reference proteome set.</text>
</comment>
<feature type="chain" id="PRO_0000299652" description="Putative uncharacterized protein YLR444C">
    <location>
        <begin position="1"/>
        <end position="100"/>
    </location>
</feature>
<feature type="transmembrane region" description="Helical" evidence="1">
    <location>
        <begin position="50"/>
        <end position="70"/>
    </location>
</feature>
<feature type="transmembrane region" description="Helical" evidence="1">
    <location>
        <begin position="75"/>
        <end position="95"/>
    </location>
</feature>
<accession>O13560</accession>
<reference key="1">
    <citation type="journal article" date="1997" name="Nature">
        <title>The nucleotide sequence of Saccharomyces cerevisiae chromosome XII.</title>
        <authorList>
            <person name="Johnston M."/>
            <person name="Hillier L.W."/>
            <person name="Riles L."/>
            <person name="Albermann K."/>
            <person name="Andre B."/>
            <person name="Ansorge W."/>
            <person name="Benes V."/>
            <person name="Brueckner M."/>
            <person name="Delius H."/>
            <person name="Dubois E."/>
            <person name="Duesterhoeft A."/>
            <person name="Entian K.-D."/>
            <person name="Floeth M."/>
            <person name="Goffeau A."/>
            <person name="Hebling U."/>
            <person name="Heumann K."/>
            <person name="Heuss-Neitzel D."/>
            <person name="Hilbert H."/>
            <person name="Hilger F."/>
            <person name="Kleine K."/>
            <person name="Koetter P."/>
            <person name="Louis E.J."/>
            <person name="Messenguy F."/>
            <person name="Mewes H.-W."/>
            <person name="Miosga T."/>
            <person name="Moestl D."/>
            <person name="Mueller-Auer S."/>
            <person name="Nentwich U."/>
            <person name="Obermaier B."/>
            <person name="Piravandi E."/>
            <person name="Pohl T.M."/>
            <person name="Portetelle D."/>
            <person name="Purnelle B."/>
            <person name="Rechmann S."/>
            <person name="Rieger M."/>
            <person name="Rinke M."/>
            <person name="Rose M."/>
            <person name="Scharfe M."/>
            <person name="Scherens B."/>
            <person name="Scholler P."/>
            <person name="Schwager C."/>
            <person name="Schwarz S."/>
            <person name="Underwood A.P."/>
            <person name="Urrestarazu L.A."/>
            <person name="Vandenbol M."/>
            <person name="Verhasselt P."/>
            <person name="Vierendeels F."/>
            <person name="Voet M."/>
            <person name="Volckaert G."/>
            <person name="Voss H."/>
            <person name="Wambutt R."/>
            <person name="Wedler E."/>
            <person name="Wedler H."/>
            <person name="Zimmermann F.K."/>
            <person name="Zollner A."/>
            <person name="Hani J."/>
            <person name="Hoheisel J.D."/>
        </authorList>
    </citation>
    <scope>NUCLEOTIDE SEQUENCE [LARGE SCALE GENOMIC DNA]</scope>
    <source>
        <strain>ATCC 204508 / S288c</strain>
    </source>
</reference>
<reference key="2">
    <citation type="journal article" date="2014" name="G3 (Bethesda)">
        <title>The reference genome sequence of Saccharomyces cerevisiae: Then and now.</title>
        <authorList>
            <person name="Engel S.R."/>
            <person name="Dietrich F.S."/>
            <person name="Fisk D.G."/>
            <person name="Binkley G."/>
            <person name="Balakrishnan R."/>
            <person name="Costanzo M.C."/>
            <person name="Dwight S.S."/>
            <person name="Hitz B.C."/>
            <person name="Karra K."/>
            <person name="Nash R.S."/>
            <person name="Weng S."/>
            <person name="Wong E.D."/>
            <person name="Lloyd P."/>
            <person name="Skrzypek M.S."/>
            <person name="Miyasato S.R."/>
            <person name="Simison M."/>
            <person name="Cherry J.M."/>
        </authorList>
    </citation>
    <scope>GENOME REANNOTATION</scope>
    <source>
        <strain>ATCC 204508 / S288c</strain>
    </source>
</reference>
<reference key="3">
    <citation type="journal article" date="2007" name="Genome Res.">
        <title>Approaching a complete repository of sequence-verified protein-encoding clones for Saccharomyces cerevisiae.</title>
        <authorList>
            <person name="Hu Y."/>
            <person name="Rolfs A."/>
            <person name="Bhullar B."/>
            <person name="Murthy T.V.S."/>
            <person name="Zhu C."/>
            <person name="Berger M.F."/>
            <person name="Camargo A.A."/>
            <person name="Kelley F."/>
            <person name="McCarron S."/>
            <person name="Jepson D."/>
            <person name="Richardson A."/>
            <person name="Raphael J."/>
            <person name="Moreira D."/>
            <person name="Taycher E."/>
            <person name="Zuo D."/>
            <person name="Mohr S."/>
            <person name="Kane M.F."/>
            <person name="Williamson J."/>
            <person name="Simpson A.J.G."/>
            <person name="Bulyk M.L."/>
            <person name="Harlow E."/>
            <person name="Marsischky G."/>
            <person name="Kolodner R.D."/>
            <person name="LaBaer J."/>
        </authorList>
    </citation>
    <scope>NUCLEOTIDE SEQUENCE [GENOMIC DNA]</scope>
    <source>
        <strain>ATCC 204508 / S288c</strain>
    </source>
</reference>
<organism>
    <name type="scientific">Saccharomyces cerevisiae (strain ATCC 204508 / S288c)</name>
    <name type="common">Baker's yeast</name>
    <dbReference type="NCBI Taxonomy" id="559292"/>
    <lineage>
        <taxon>Eukaryota</taxon>
        <taxon>Fungi</taxon>
        <taxon>Dikarya</taxon>
        <taxon>Ascomycota</taxon>
        <taxon>Saccharomycotina</taxon>
        <taxon>Saccharomycetes</taxon>
        <taxon>Saccharomycetales</taxon>
        <taxon>Saccharomycetaceae</taxon>
        <taxon>Saccharomyces</taxon>
    </lineage>
</organism>
<keyword id="KW-0472">Membrane</keyword>
<keyword id="KW-0812">Transmembrane</keyword>
<keyword id="KW-1133">Transmembrane helix</keyword>